<reference key="1">
    <citation type="journal article" date="2010" name="Appl. Environ. Microbiol.">
        <title>Conserved symbiotic plasmid DNA sequences in the multireplicon pangenomic structure of Rhizobium etli.</title>
        <authorList>
            <person name="Gonzalez V."/>
            <person name="Acosta J.L."/>
            <person name="Santamaria R.I."/>
            <person name="Bustos P."/>
            <person name="Fernandez J.L."/>
            <person name="Hernandez Gonzalez I.L."/>
            <person name="Diaz R."/>
            <person name="Flores M."/>
            <person name="Palacios R."/>
            <person name="Mora J."/>
            <person name="Davila G."/>
        </authorList>
    </citation>
    <scope>NUCLEOTIDE SEQUENCE [LARGE SCALE GENOMIC DNA]</scope>
    <source>
        <strain>CIAT 652</strain>
    </source>
</reference>
<protein>
    <recommendedName>
        <fullName evidence="1">Crossover junction endodeoxyribonuclease RuvC</fullName>
        <ecNumber evidence="1">3.1.21.10</ecNumber>
    </recommendedName>
    <alternativeName>
        <fullName evidence="1">Holliday junction nuclease RuvC</fullName>
    </alternativeName>
    <alternativeName>
        <fullName evidence="1">Holliday junction resolvase RuvC</fullName>
    </alternativeName>
</protein>
<accession>B3PYZ1</accession>
<evidence type="ECO:0000255" key="1">
    <source>
        <dbReference type="HAMAP-Rule" id="MF_00034"/>
    </source>
</evidence>
<organism>
    <name type="scientific">Rhizobium etli (strain CIAT 652)</name>
    <dbReference type="NCBI Taxonomy" id="491916"/>
    <lineage>
        <taxon>Bacteria</taxon>
        <taxon>Pseudomonadati</taxon>
        <taxon>Pseudomonadota</taxon>
        <taxon>Alphaproteobacteria</taxon>
        <taxon>Hyphomicrobiales</taxon>
        <taxon>Rhizobiaceae</taxon>
        <taxon>Rhizobium/Agrobacterium group</taxon>
        <taxon>Rhizobium</taxon>
    </lineage>
</organism>
<gene>
    <name evidence="1" type="primary">ruvC</name>
    <name type="ordered locus">RHECIAT_CH0003717</name>
</gene>
<keyword id="KW-0963">Cytoplasm</keyword>
<keyword id="KW-0227">DNA damage</keyword>
<keyword id="KW-0233">DNA recombination</keyword>
<keyword id="KW-0234">DNA repair</keyword>
<keyword id="KW-0238">DNA-binding</keyword>
<keyword id="KW-0255">Endonuclease</keyword>
<keyword id="KW-0378">Hydrolase</keyword>
<keyword id="KW-0460">Magnesium</keyword>
<keyword id="KW-0479">Metal-binding</keyword>
<keyword id="KW-0540">Nuclease</keyword>
<sequence>MQNTIRIVGIDPGLRRTGWGIIDTLGNSLRFVASGTVTSDGDMDLASRLCQLHDGLAEVVHAYKPDEAAVEQTFVNKDAVATLKLGQARGIAMLVPARAGLHVSEYAPNAVKKAVIGVGHGEKHQIHMMLKILMPKVEFKGDDAADALAIAICHAHNRGSNRMRQALAG</sequence>
<comment type="function">
    <text evidence="1">The RuvA-RuvB-RuvC complex processes Holliday junction (HJ) DNA during genetic recombination and DNA repair. Endonuclease that resolves HJ intermediates. Cleaves cruciform DNA by making single-stranded nicks across the HJ at symmetrical positions within the homologous arms, yielding a 5'-phosphate and a 3'-hydroxyl group; requires a central core of homology in the junction. The consensus cleavage sequence is 5'-(A/T)TT(C/G)-3'. Cleavage occurs on the 3'-side of the TT dinucleotide at the point of strand exchange. HJ branch migration catalyzed by RuvA-RuvB allows RuvC to scan DNA until it finds its consensus sequence, where it cleaves and resolves the cruciform DNA.</text>
</comment>
<comment type="catalytic activity">
    <reaction evidence="1">
        <text>Endonucleolytic cleavage at a junction such as a reciprocal single-stranded crossover between two homologous DNA duplexes (Holliday junction).</text>
        <dbReference type="EC" id="3.1.21.10"/>
    </reaction>
</comment>
<comment type="cofactor">
    <cofactor evidence="1">
        <name>Mg(2+)</name>
        <dbReference type="ChEBI" id="CHEBI:18420"/>
    </cofactor>
    <text evidence="1">Binds 2 Mg(2+) ion per subunit.</text>
</comment>
<comment type="subunit">
    <text evidence="1">Homodimer which binds Holliday junction (HJ) DNA. The HJ becomes 2-fold symmetrical on binding to RuvC with unstacked arms; it has a different conformation from HJ DNA in complex with RuvA. In the full resolvosome a probable DNA-RuvA(4)-RuvB(12)-RuvC(2) complex forms which resolves the HJ.</text>
</comment>
<comment type="subcellular location">
    <subcellularLocation>
        <location evidence="1">Cytoplasm</location>
    </subcellularLocation>
</comment>
<comment type="similarity">
    <text evidence="1">Belongs to the RuvC family.</text>
</comment>
<name>RUVC_RHIE6</name>
<proteinExistence type="inferred from homology"/>
<feature type="chain" id="PRO_1000090552" description="Crossover junction endodeoxyribonuclease RuvC">
    <location>
        <begin position="1"/>
        <end position="169"/>
    </location>
</feature>
<feature type="active site" evidence="1">
    <location>
        <position position="11"/>
    </location>
</feature>
<feature type="active site" evidence="1">
    <location>
        <position position="71"/>
    </location>
</feature>
<feature type="active site" evidence="1">
    <location>
        <position position="143"/>
    </location>
</feature>
<feature type="binding site" evidence="1">
    <location>
        <position position="11"/>
    </location>
    <ligand>
        <name>Mg(2+)</name>
        <dbReference type="ChEBI" id="CHEBI:18420"/>
        <label>1</label>
    </ligand>
</feature>
<feature type="binding site" evidence="1">
    <location>
        <position position="71"/>
    </location>
    <ligand>
        <name>Mg(2+)</name>
        <dbReference type="ChEBI" id="CHEBI:18420"/>
        <label>2</label>
    </ligand>
</feature>
<feature type="binding site" evidence="1">
    <location>
        <position position="143"/>
    </location>
    <ligand>
        <name>Mg(2+)</name>
        <dbReference type="ChEBI" id="CHEBI:18420"/>
        <label>1</label>
    </ligand>
</feature>
<dbReference type="EC" id="3.1.21.10" evidence="1"/>
<dbReference type="EMBL" id="CP001074">
    <property type="protein sequence ID" value="ACE92655.1"/>
    <property type="molecule type" value="Genomic_DNA"/>
</dbReference>
<dbReference type="SMR" id="B3PYZ1"/>
<dbReference type="KEGG" id="rec:RHECIAT_CH0003717"/>
<dbReference type="eggNOG" id="COG0817">
    <property type="taxonomic scope" value="Bacteria"/>
</dbReference>
<dbReference type="HOGENOM" id="CLU_091257_1_0_5"/>
<dbReference type="Proteomes" id="UP000008817">
    <property type="component" value="Chromosome"/>
</dbReference>
<dbReference type="GO" id="GO:0005737">
    <property type="term" value="C:cytoplasm"/>
    <property type="evidence" value="ECO:0007669"/>
    <property type="project" value="UniProtKB-SubCell"/>
</dbReference>
<dbReference type="GO" id="GO:0048476">
    <property type="term" value="C:Holliday junction resolvase complex"/>
    <property type="evidence" value="ECO:0007669"/>
    <property type="project" value="UniProtKB-UniRule"/>
</dbReference>
<dbReference type="GO" id="GO:0008821">
    <property type="term" value="F:crossover junction DNA endonuclease activity"/>
    <property type="evidence" value="ECO:0007669"/>
    <property type="project" value="UniProtKB-UniRule"/>
</dbReference>
<dbReference type="GO" id="GO:0003677">
    <property type="term" value="F:DNA binding"/>
    <property type="evidence" value="ECO:0007669"/>
    <property type="project" value="UniProtKB-KW"/>
</dbReference>
<dbReference type="GO" id="GO:0000287">
    <property type="term" value="F:magnesium ion binding"/>
    <property type="evidence" value="ECO:0007669"/>
    <property type="project" value="UniProtKB-UniRule"/>
</dbReference>
<dbReference type="GO" id="GO:0006310">
    <property type="term" value="P:DNA recombination"/>
    <property type="evidence" value="ECO:0007669"/>
    <property type="project" value="UniProtKB-UniRule"/>
</dbReference>
<dbReference type="GO" id="GO:0006281">
    <property type="term" value="P:DNA repair"/>
    <property type="evidence" value="ECO:0007669"/>
    <property type="project" value="UniProtKB-UniRule"/>
</dbReference>
<dbReference type="CDD" id="cd16962">
    <property type="entry name" value="RuvC"/>
    <property type="match status" value="1"/>
</dbReference>
<dbReference type="FunFam" id="3.30.420.10:FF:000002">
    <property type="entry name" value="Crossover junction endodeoxyribonuclease RuvC"/>
    <property type="match status" value="1"/>
</dbReference>
<dbReference type="Gene3D" id="3.30.420.10">
    <property type="entry name" value="Ribonuclease H-like superfamily/Ribonuclease H"/>
    <property type="match status" value="1"/>
</dbReference>
<dbReference type="HAMAP" id="MF_00034">
    <property type="entry name" value="RuvC"/>
    <property type="match status" value="1"/>
</dbReference>
<dbReference type="InterPro" id="IPR012337">
    <property type="entry name" value="RNaseH-like_sf"/>
</dbReference>
<dbReference type="InterPro" id="IPR036397">
    <property type="entry name" value="RNaseH_sf"/>
</dbReference>
<dbReference type="InterPro" id="IPR020563">
    <property type="entry name" value="X-over_junc_endoDNase_Mg_BS"/>
</dbReference>
<dbReference type="InterPro" id="IPR002176">
    <property type="entry name" value="X-over_junc_endoDNase_RuvC"/>
</dbReference>
<dbReference type="NCBIfam" id="TIGR00228">
    <property type="entry name" value="ruvC"/>
    <property type="match status" value="1"/>
</dbReference>
<dbReference type="PANTHER" id="PTHR30194">
    <property type="entry name" value="CROSSOVER JUNCTION ENDODEOXYRIBONUCLEASE RUVC"/>
    <property type="match status" value="1"/>
</dbReference>
<dbReference type="PANTHER" id="PTHR30194:SF3">
    <property type="entry name" value="CROSSOVER JUNCTION ENDODEOXYRIBONUCLEASE RUVC"/>
    <property type="match status" value="1"/>
</dbReference>
<dbReference type="Pfam" id="PF02075">
    <property type="entry name" value="RuvC"/>
    <property type="match status" value="1"/>
</dbReference>
<dbReference type="PRINTS" id="PR00696">
    <property type="entry name" value="RSOLVASERUVC"/>
</dbReference>
<dbReference type="SUPFAM" id="SSF53098">
    <property type="entry name" value="Ribonuclease H-like"/>
    <property type="match status" value="1"/>
</dbReference>
<dbReference type="PROSITE" id="PS01321">
    <property type="entry name" value="RUVC"/>
    <property type="match status" value="1"/>
</dbReference>